<keyword id="KW-0963">Cytoplasm</keyword>
<keyword id="KW-0251">Elongation factor</keyword>
<keyword id="KW-0648">Protein biosynthesis</keyword>
<keyword id="KW-1185">Reference proteome</keyword>
<feature type="chain" id="PRO_0000161225" description="Elongation factor Ts">
    <location>
        <begin position="1"/>
        <end position="290"/>
    </location>
</feature>
<feature type="region of interest" description="Involved in Mg(2+) ion dislocation from EF-Tu" evidence="1">
    <location>
        <begin position="87"/>
        <end position="90"/>
    </location>
</feature>
<gene>
    <name type="primary">tsf</name>
    <name type="ordered locus">TP_0605</name>
</gene>
<comment type="function">
    <text evidence="1">Associates with the EF-Tu.GDP complex and induces the exchange of GDP to GTP. It remains bound to the aminoacyl-tRNA.EF-Tu.GTP complex up to the GTP hydrolysis stage on the ribosome (By similarity).</text>
</comment>
<comment type="subcellular location">
    <subcellularLocation>
        <location evidence="1">Cytoplasm</location>
    </subcellularLocation>
</comment>
<comment type="similarity">
    <text evidence="2">Belongs to the EF-Ts family.</text>
</comment>
<protein>
    <recommendedName>
        <fullName>Elongation factor Ts</fullName>
        <shortName>EF-Ts</shortName>
    </recommendedName>
</protein>
<organism>
    <name type="scientific">Treponema pallidum (strain Nichols)</name>
    <dbReference type="NCBI Taxonomy" id="243276"/>
    <lineage>
        <taxon>Bacteria</taxon>
        <taxon>Pseudomonadati</taxon>
        <taxon>Spirochaetota</taxon>
        <taxon>Spirochaetia</taxon>
        <taxon>Spirochaetales</taxon>
        <taxon>Treponemataceae</taxon>
        <taxon>Treponema</taxon>
    </lineage>
</organism>
<evidence type="ECO:0000250" key="1"/>
<evidence type="ECO:0000305" key="2"/>
<proteinExistence type="inferred from homology"/>
<accession>O83614</accession>
<dbReference type="EMBL" id="AE000520">
    <property type="protein sequence ID" value="AAC65578.1"/>
    <property type="molecule type" value="Genomic_DNA"/>
</dbReference>
<dbReference type="PIR" id="G71304">
    <property type="entry name" value="G71304"/>
</dbReference>
<dbReference type="RefSeq" id="WP_010882051.1">
    <property type="nucleotide sequence ID" value="NC_021490.2"/>
</dbReference>
<dbReference type="SMR" id="O83614"/>
<dbReference type="IntAct" id="O83614">
    <property type="interactions" value="1"/>
</dbReference>
<dbReference type="STRING" id="243276.TP_0605"/>
<dbReference type="EnsemblBacteria" id="AAC65578">
    <property type="protein sequence ID" value="AAC65578"/>
    <property type="gene ID" value="TP_0605"/>
</dbReference>
<dbReference type="GeneID" id="93876372"/>
<dbReference type="KEGG" id="tpa:TP_0605"/>
<dbReference type="KEGG" id="tpw:TPANIC_0605"/>
<dbReference type="eggNOG" id="COG0264">
    <property type="taxonomic scope" value="Bacteria"/>
</dbReference>
<dbReference type="HOGENOM" id="CLU_047155_0_0_12"/>
<dbReference type="OrthoDB" id="9808348at2"/>
<dbReference type="Proteomes" id="UP000000811">
    <property type="component" value="Chromosome"/>
</dbReference>
<dbReference type="GO" id="GO:0005737">
    <property type="term" value="C:cytoplasm"/>
    <property type="evidence" value="ECO:0007669"/>
    <property type="project" value="UniProtKB-SubCell"/>
</dbReference>
<dbReference type="GO" id="GO:0003746">
    <property type="term" value="F:translation elongation factor activity"/>
    <property type="evidence" value="ECO:0007669"/>
    <property type="project" value="UniProtKB-UniRule"/>
</dbReference>
<dbReference type="CDD" id="cd14275">
    <property type="entry name" value="UBA_EF-Ts"/>
    <property type="match status" value="1"/>
</dbReference>
<dbReference type="FunFam" id="1.10.8.10:FF:000001">
    <property type="entry name" value="Elongation factor Ts"/>
    <property type="match status" value="1"/>
</dbReference>
<dbReference type="Gene3D" id="1.10.286.20">
    <property type="match status" value="1"/>
</dbReference>
<dbReference type="Gene3D" id="1.10.8.10">
    <property type="entry name" value="DNA helicase RuvA subunit, C-terminal domain"/>
    <property type="match status" value="1"/>
</dbReference>
<dbReference type="Gene3D" id="3.30.479.20">
    <property type="entry name" value="Elongation factor Ts, dimerisation domain"/>
    <property type="match status" value="2"/>
</dbReference>
<dbReference type="HAMAP" id="MF_00050">
    <property type="entry name" value="EF_Ts"/>
    <property type="match status" value="1"/>
</dbReference>
<dbReference type="InterPro" id="IPR036402">
    <property type="entry name" value="EF-Ts_dimer_sf"/>
</dbReference>
<dbReference type="InterPro" id="IPR001816">
    <property type="entry name" value="Transl_elong_EFTs/EF1B"/>
</dbReference>
<dbReference type="InterPro" id="IPR014039">
    <property type="entry name" value="Transl_elong_EFTs/EF1B_dimer"/>
</dbReference>
<dbReference type="InterPro" id="IPR018101">
    <property type="entry name" value="Transl_elong_Ts_CS"/>
</dbReference>
<dbReference type="InterPro" id="IPR009060">
    <property type="entry name" value="UBA-like_sf"/>
</dbReference>
<dbReference type="NCBIfam" id="TIGR00116">
    <property type="entry name" value="tsf"/>
    <property type="match status" value="1"/>
</dbReference>
<dbReference type="PANTHER" id="PTHR11741">
    <property type="entry name" value="ELONGATION FACTOR TS"/>
    <property type="match status" value="1"/>
</dbReference>
<dbReference type="PANTHER" id="PTHR11741:SF0">
    <property type="entry name" value="ELONGATION FACTOR TS, MITOCHONDRIAL"/>
    <property type="match status" value="1"/>
</dbReference>
<dbReference type="Pfam" id="PF00889">
    <property type="entry name" value="EF_TS"/>
    <property type="match status" value="1"/>
</dbReference>
<dbReference type="SUPFAM" id="SSF54713">
    <property type="entry name" value="Elongation factor Ts (EF-Ts), dimerisation domain"/>
    <property type="match status" value="2"/>
</dbReference>
<dbReference type="SUPFAM" id="SSF46934">
    <property type="entry name" value="UBA-like"/>
    <property type="match status" value="1"/>
</dbReference>
<dbReference type="PROSITE" id="PS01126">
    <property type="entry name" value="EF_TS_1"/>
    <property type="match status" value="1"/>
</dbReference>
<dbReference type="PROSITE" id="PS01127">
    <property type="entry name" value="EF_TS_2"/>
    <property type="match status" value="1"/>
</dbReference>
<reference key="1">
    <citation type="journal article" date="1998" name="Science">
        <title>Complete genome sequence of Treponema pallidum, the syphilis spirochete.</title>
        <authorList>
            <person name="Fraser C.M."/>
            <person name="Norris S.J."/>
            <person name="Weinstock G.M."/>
            <person name="White O."/>
            <person name="Sutton G.G."/>
            <person name="Dodson R.J."/>
            <person name="Gwinn M.L."/>
            <person name="Hickey E.K."/>
            <person name="Clayton R.A."/>
            <person name="Ketchum K.A."/>
            <person name="Sodergren E."/>
            <person name="Hardham J.M."/>
            <person name="McLeod M.P."/>
            <person name="Salzberg S.L."/>
            <person name="Peterson J.D."/>
            <person name="Khalak H.G."/>
            <person name="Richardson D.L."/>
            <person name="Howell J.K."/>
            <person name="Chidambaram M."/>
            <person name="Utterback T.R."/>
            <person name="McDonald L.A."/>
            <person name="Artiach P."/>
            <person name="Bowman C."/>
            <person name="Cotton M.D."/>
            <person name="Fujii C."/>
            <person name="Garland S.A."/>
            <person name="Hatch B."/>
            <person name="Horst K."/>
            <person name="Roberts K.M."/>
            <person name="Sandusky M."/>
            <person name="Weidman J.F."/>
            <person name="Smith H.O."/>
            <person name="Venter J.C."/>
        </authorList>
    </citation>
    <scope>NUCLEOTIDE SEQUENCE [LARGE SCALE GENOMIC DNA]</scope>
    <source>
        <strain>Nichols</strain>
    </source>
</reference>
<name>EFTS_TREPA</name>
<sequence>MEIAARDVKSLRDKTGAGMMECKRALQECAGDALCAEKYLKERGLAAIENRRGRATAEGVIVIKARHAEGAACGASAVAMVELVCETDFVAKNAEFIALAERIAQAVLEHAYTEVNQVLRDMVVDLATRVRENMSLTRLALLRAGSAGAGQYLSHYVHPDKKTGVVLSFSSDAPDVFLRSDVRAFAYDCCLHAAAYTPRYVRAEDVPAEYVREQREVFQAHVASLQKPAHVKESIVQGKLEKHLAEICFLKQPFVKDDKLSVEKKMAEVGARAGGALRFTQALIYQLGVQ</sequence>